<organism>
    <name type="scientific">Escherichia coli O17:K52:H18 (strain UMN026 / ExPEC)</name>
    <dbReference type="NCBI Taxonomy" id="585056"/>
    <lineage>
        <taxon>Bacteria</taxon>
        <taxon>Pseudomonadati</taxon>
        <taxon>Pseudomonadota</taxon>
        <taxon>Gammaproteobacteria</taxon>
        <taxon>Enterobacterales</taxon>
        <taxon>Enterobacteriaceae</taxon>
        <taxon>Escherichia</taxon>
    </lineage>
</organism>
<name>SLYA_ECOLU</name>
<evidence type="ECO:0000255" key="1">
    <source>
        <dbReference type="HAMAP-Rule" id="MF_01819"/>
    </source>
</evidence>
<protein>
    <recommendedName>
        <fullName evidence="1">Transcriptional regulator SlyA</fullName>
    </recommendedName>
</protein>
<accession>B7NB96</accession>
<feature type="chain" id="PRO_1000188013" description="Transcriptional regulator SlyA">
    <location>
        <begin position="1"/>
        <end position="144"/>
    </location>
</feature>
<feature type="domain" description="HTH marR-type" evidence="1">
    <location>
        <begin position="2"/>
        <end position="135"/>
    </location>
</feature>
<feature type="DNA-binding region" description="H-T-H motif" evidence="1">
    <location>
        <begin position="49"/>
        <end position="72"/>
    </location>
</feature>
<dbReference type="EMBL" id="CU928163">
    <property type="protein sequence ID" value="CAR13130.1"/>
    <property type="molecule type" value="Genomic_DNA"/>
</dbReference>
<dbReference type="RefSeq" id="WP_000445640.1">
    <property type="nucleotide sequence ID" value="NC_011751.1"/>
</dbReference>
<dbReference type="RefSeq" id="YP_002412662.1">
    <property type="nucleotide sequence ID" value="NC_011751.1"/>
</dbReference>
<dbReference type="SMR" id="B7NB96"/>
<dbReference type="STRING" id="585056.ECUMN_1933"/>
<dbReference type="KEGG" id="eum:ECUMN_1933"/>
<dbReference type="PATRIC" id="fig|585056.7.peg.2116"/>
<dbReference type="HOGENOM" id="CLU_083287_18_2_6"/>
<dbReference type="Proteomes" id="UP000007097">
    <property type="component" value="Chromosome"/>
</dbReference>
<dbReference type="GO" id="GO:0003677">
    <property type="term" value="F:DNA binding"/>
    <property type="evidence" value="ECO:0007669"/>
    <property type="project" value="UniProtKB-UniRule"/>
</dbReference>
<dbReference type="GO" id="GO:0003700">
    <property type="term" value="F:DNA-binding transcription factor activity"/>
    <property type="evidence" value="ECO:0007669"/>
    <property type="project" value="UniProtKB-UniRule"/>
</dbReference>
<dbReference type="GO" id="GO:0006950">
    <property type="term" value="P:response to stress"/>
    <property type="evidence" value="ECO:0007669"/>
    <property type="project" value="TreeGrafter"/>
</dbReference>
<dbReference type="FunFam" id="1.10.10.10:FF:000261">
    <property type="entry name" value="Transcriptional regulator SlyA"/>
    <property type="match status" value="1"/>
</dbReference>
<dbReference type="Gene3D" id="1.10.10.10">
    <property type="entry name" value="Winged helix-like DNA-binding domain superfamily/Winged helix DNA-binding domain"/>
    <property type="match status" value="1"/>
</dbReference>
<dbReference type="HAMAP" id="MF_01819">
    <property type="entry name" value="HTH_type_SlyA"/>
    <property type="match status" value="1"/>
</dbReference>
<dbReference type="InterPro" id="IPR000835">
    <property type="entry name" value="HTH_MarR-typ"/>
</dbReference>
<dbReference type="InterPro" id="IPR039422">
    <property type="entry name" value="MarR/SlyA-like"/>
</dbReference>
<dbReference type="InterPro" id="IPR023187">
    <property type="entry name" value="Tscrpt_reg_MarR-type_CS"/>
</dbReference>
<dbReference type="InterPro" id="IPR023071">
    <property type="entry name" value="Tscrpt_reg_SlyA"/>
</dbReference>
<dbReference type="InterPro" id="IPR036388">
    <property type="entry name" value="WH-like_DNA-bd_sf"/>
</dbReference>
<dbReference type="InterPro" id="IPR036390">
    <property type="entry name" value="WH_DNA-bd_sf"/>
</dbReference>
<dbReference type="NCBIfam" id="NF002926">
    <property type="entry name" value="PRK03573.1"/>
    <property type="match status" value="1"/>
</dbReference>
<dbReference type="PANTHER" id="PTHR33164:SF64">
    <property type="entry name" value="TRANSCRIPTIONAL REGULATOR SLYA"/>
    <property type="match status" value="1"/>
</dbReference>
<dbReference type="PANTHER" id="PTHR33164">
    <property type="entry name" value="TRANSCRIPTIONAL REGULATOR, MARR FAMILY"/>
    <property type="match status" value="1"/>
</dbReference>
<dbReference type="Pfam" id="PF01047">
    <property type="entry name" value="MarR"/>
    <property type="match status" value="1"/>
</dbReference>
<dbReference type="PRINTS" id="PR00598">
    <property type="entry name" value="HTHMARR"/>
</dbReference>
<dbReference type="SMART" id="SM00347">
    <property type="entry name" value="HTH_MARR"/>
    <property type="match status" value="1"/>
</dbReference>
<dbReference type="SUPFAM" id="SSF46785">
    <property type="entry name" value="Winged helix' DNA-binding domain"/>
    <property type="match status" value="1"/>
</dbReference>
<dbReference type="PROSITE" id="PS01117">
    <property type="entry name" value="HTH_MARR_1"/>
    <property type="match status" value="1"/>
</dbReference>
<dbReference type="PROSITE" id="PS50995">
    <property type="entry name" value="HTH_MARR_2"/>
    <property type="match status" value="1"/>
</dbReference>
<comment type="function">
    <text evidence="1">Transcription regulator that can specifically activate or repress expression of target genes.</text>
</comment>
<comment type="subunit">
    <text evidence="1">Homodimer.</text>
</comment>
<comment type="similarity">
    <text evidence="1">Belongs to the SlyA family.</text>
</comment>
<gene>
    <name evidence="1" type="primary">slyA</name>
    <name type="ordered locus">ECUMN_1933</name>
</gene>
<reference key="1">
    <citation type="journal article" date="2009" name="PLoS Genet.">
        <title>Organised genome dynamics in the Escherichia coli species results in highly diverse adaptive paths.</title>
        <authorList>
            <person name="Touchon M."/>
            <person name="Hoede C."/>
            <person name="Tenaillon O."/>
            <person name="Barbe V."/>
            <person name="Baeriswyl S."/>
            <person name="Bidet P."/>
            <person name="Bingen E."/>
            <person name="Bonacorsi S."/>
            <person name="Bouchier C."/>
            <person name="Bouvet O."/>
            <person name="Calteau A."/>
            <person name="Chiapello H."/>
            <person name="Clermont O."/>
            <person name="Cruveiller S."/>
            <person name="Danchin A."/>
            <person name="Diard M."/>
            <person name="Dossat C."/>
            <person name="Karoui M.E."/>
            <person name="Frapy E."/>
            <person name="Garry L."/>
            <person name="Ghigo J.M."/>
            <person name="Gilles A.M."/>
            <person name="Johnson J."/>
            <person name="Le Bouguenec C."/>
            <person name="Lescat M."/>
            <person name="Mangenot S."/>
            <person name="Martinez-Jehanne V."/>
            <person name="Matic I."/>
            <person name="Nassif X."/>
            <person name="Oztas S."/>
            <person name="Petit M.A."/>
            <person name="Pichon C."/>
            <person name="Rouy Z."/>
            <person name="Ruf C.S."/>
            <person name="Schneider D."/>
            <person name="Tourret J."/>
            <person name="Vacherie B."/>
            <person name="Vallenet D."/>
            <person name="Medigue C."/>
            <person name="Rocha E.P.C."/>
            <person name="Denamur E."/>
        </authorList>
    </citation>
    <scope>NUCLEOTIDE SEQUENCE [LARGE SCALE GENOMIC DNA]</scope>
    <source>
        <strain>UMN026 / ExPEC</strain>
    </source>
</reference>
<proteinExistence type="inferred from homology"/>
<sequence>MESPLGSDLARLVRIWRALIDHRLKPLELTQTHWVTLHNIHQLPPDQSQIQLAKAIGIEQPSLVRTLDQLEEKGLISRQTCASDRRAKRIKLTEKAEPLISEMEAVINKTRAEILHGISAEELEQLIKLIAKLEHNIIELQAKG</sequence>
<keyword id="KW-0010">Activator</keyword>
<keyword id="KW-0238">DNA-binding</keyword>
<keyword id="KW-0678">Repressor</keyword>
<keyword id="KW-0804">Transcription</keyword>
<keyword id="KW-0805">Transcription regulation</keyword>